<gene>
    <name evidence="1" type="primary">hisA</name>
    <name type="ordered locus">APL_2026</name>
</gene>
<evidence type="ECO:0000255" key="1">
    <source>
        <dbReference type="HAMAP-Rule" id="MF_01014"/>
    </source>
</evidence>
<organism>
    <name type="scientific">Actinobacillus pleuropneumoniae serotype 5b (strain L20)</name>
    <dbReference type="NCBI Taxonomy" id="416269"/>
    <lineage>
        <taxon>Bacteria</taxon>
        <taxon>Pseudomonadati</taxon>
        <taxon>Pseudomonadota</taxon>
        <taxon>Gammaproteobacteria</taxon>
        <taxon>Pasteurellales</taxon>
        <taxon>Pasteurellaceae</taxon>
        <taxon>Actinobacillus</taxon>
    </lineage>
</organism>
<sequence>MQKKSIIIPALDLIDGNVVRLHQGDYAKQTTYSDNPIEQFANYLAQGAEQLHLVDLTGAKYPAKRQTALIGKIIAETNCQIQVGGGIRTEQDVADLLAVGANRVVIGSTAVKDRAMVKGWFEKYGAEKFVLALDVNIDASGQKIIAISGWQEASGVSLEELIEDYQVVGLQHVLCTDISRDGTLAGSNVNLYREICAKYPKIHFQSSGGIGSLDDIKALKGTGVSGVIVGRALLEGKFNVAEAIECWQNG</sequence>
<reference key="1">
    <citation type="journal article" date="2008" name="J. Bacteriol.">
        <title>The complete genome sequence of Actinobacillus pleuropneumoniae L20 (serotype 5b).</title>
        <authorList>
            <person name="Foote S.J."/>
            <person name="Bosse J.T."/>
            <person name="Bouevitch A.B."/>
            <person name="Langford P.R."/>
            <person name="Young N.M."/>
            <person name="Nash J.H.E."/>
        </authorList>
    </citation>
    <scope>NUCLEOTIDE SEQUENCE [LARGE SCALE GENOMIC DNA]</scope>
    <source>
        <strain>L20</strain>
    </source>
</reference>
<comment type="catalytic activity">
    <reaction evidence="1">
        <text>1-(5-phospho-beta-D-ribosyl)-5-[(5-phospho-beta-D-ribosylamino)methylideneamino]imidazole-4-carboxamide = 5-[(5-phospho-1-deoxy-D-ribulos-1-ylimino)methylamino]-1-(5-phospho-beta-D-ribosyl)imidazole-4-carboxamide</text>
        <dbReference type="Rhea" id="RHEA:15469"/>
        <dbReference type="ChEBI" id="CHEBI:58435"/>
        <dbReference type="ChEBI" id="CHEBI:58525"/>
        <dbReference type="EC" id="5.3.1.16"/>
    </reaction>
</comment>
<comment type="pathway">
    <text evidence="1">Amino-acid biosynthesis; L-histidine biosynthesis; L-histidine from 5-phospho-alpha-D-ribose 1-diphosphate: step 4/9.</text>
</comment>
<comment type="subcellular location">
    <subcellularLocation>
        <location evidence="1">Cytoplasm</location>
    </subcellularLocation>
</comment>
<comment type="similarity">
    <text evidence="1">Belongs to the HisA/HisF family.</text>
</comment>
<feature type="chain" id="PRO_0000319467" description="1-(5-phosphoribosyl)-5-[(5-phosphoribosylamino)methylideneamino] imidazole-4-carboxamide isomerase">
    <location>
        <begin position="1"/>
        <end position="250"/>
    </location>
</feature>
<feature type="active site" description="Proton acceptor" evidence="1">
    <location>
        <position position="12"/>
    </location>
</feature>
<feature type="active site" description="Proton donor" evidence="1">
    <location>
        <position position="134"/>
    </location>
</feature>
<dbReference type="EC" id="5.3.1.16" evidence="1"/>
<dbReference type="EMBL" id="CP000569">
    <property type="protein sequence ID" value="ABN75100.1"/>
    <property type="molecule type" value="Genomic_DNA"/>
</dbReference>
<dbReference type="RefSeq" id="WP_005614226.1">
    <property type="nucleotide sequence ID" value="NC_009053.1"/>
</dbReference>
<dbReference type="SMR" id="A3N3W4"/>
<dbReference type="STRING" id="416269.APL_2026"/>
<dbReference type="EnsemblBacteria" id="ABN75100">
    <property type="protein sequence ID" value="ABN75100"/>
    <property type="gene ID" value="APL_2026"/>
</dbReference>
<dbReference type="KEGG" id="apl:APL_2026"/>
<dbReference type="eggNOG" id="COG0106">
    <property type="taxonomic scope" value="Bacteria"/>
</dbReference>
<dbReference type="HOGENOM" id="CLU_048577_1_2_6"/>
<dbReference type="UniPathway" id="UPA00031">
    <property type="reaction ID" value="UER00009"/>
</dbReference>
<dbReference type="Proteomes" id="UP000001432">
    <property type="component" value="Chromosome"/>
</dbReference>
<dbReference type="GO" id="GO:0005737">
    <property type="term" value="C:cytoplasm"/>
    <property type="evidence" value="ECO:0007669"/>
    <property type="project" value="UniProtKB-SubCell"/>
</dbReference>
<dbReference type="GO" id="GO:0003949">
    <property type="term" value="F:1-(5-phosphoribosyl)-5-[(5-phosphoribosylamino)methylideneamino]imidazole-4-carboxamide isomerase activity"/>
    <property type="evidence" value="ECO:0007669"/>
    <property type="project" value="UniProtKB-UniRule"/>
</dbReference>
<dbReference type="GO" id="GO:0000105">
    <property type="term" value="P:L-histidine biosynthetic process"/>
    <property type="evidence" value="ECO:0007669"/>
    <property type="project" value="UniProtKB-UniRule"/>
</dbReference>
<dbReference type="GO" id="GO:0000162">
    <property type="term" value="P:L-tryptophan biosynthetic process"/>
    <property type="evidence" value="ECO:0007669"/>
    <property type="project" value="TreeGrafter"/>
</dbReference>
<dbReference type="CDD" id="cd04732">
    <property type="entry name" value="HisA"/>
    <property type="match status" value="1"/>
</dbReference>
<dbReference type="FunFam" id="3.20.20.70:FF:000009">
    <property type="entry name" value="1-(5-phosphoribosyl)-5-[(5-phosphoribosylamino)methylideneamino] imidazole-4-carboxamide isomerase"/>
    <property type="match status" value="1"/>
</dbReference>
<dbReference type="Gene3D" id="3.20.20.70">
    <property type="entry name" value="Aldolase class I"/>
    <property type="match status" value="1"/>
</dbReference>
<dbReference type="HAMAP" id="MF_01014">
    <property type="entry name" value="HisA"/>
    <property type="match status" value="1"/>
</dbReference>
<dbReference type="InterPro" id="IPR013785">
    <property type="entry name" value="Aldolase_TIM"/>
</dbReference>
<dbReference type="InterPro" id="IPR006062">
    <property type="entry name" value="His_biosynth"/>
</dbReference>
<dbReference type="InterPro" id="IPR006063">
    <property type="entry name" value="HisA_bact_arch"/>
</dbReference>
<dbReference type="InterPro" id="IPR044524">
    <property type="entry name" value="Isoase_HisA-like"/>
</dbReference>
<dbReference type="InterPro" id="IPR023016">
    <property type="entry name" value="Isoase_HisA-like_bact"/>
</dbReference>
<dbReference type="InterPro" id="IPR011060">
    <property type="entry name" value="RibuloseP-bd_barrel"/>
</dbReference>
<dbReference type="NCBIfam" id="TIGR00007">
    <property type="entry name" value="1-(5-phosphoribosyl)-5-[(5-phosphoribosylamino)methylideneamino]imidazole-4-carboxamide isomerase"/>
    <property type="match status" value="1"/>
</dbReference>
<dbReference type="PANTHER" id="PTHR43090">
    <property type="entry name" value="1-(5-PHOSPHORIBOSYL)-5-[(5-PHOSPHORIBOSYLAMINO)METHYLIDENEAMINO] IMIDAZOLE-4-CARBOXAMIDE ISOMERASE"/>
    <property type="match status" value="1"/>
</dbReference>
<dbReference type="PANTHER" id="PTHR43090:SF2">
    <property type="entry name" value="1-(5-PHOSPHORIBOSYL)-5-[(5-PHOSPHORIBOSYLAMINO)METHYLIDENEAMINO] IMIDAZOLE-4-CARBOXAMIDE ISOMERASE"/>
    <property type="match status" value="1"/>
</dbReference>
<dbReference type="Pfam" id="PF00977">
    <property type="entry name" value="His_biosynth"/>
    <property type="match status" value="1"/>
</dbReference>
<dbReference type="SUPFAM" id="SSF51366">
    <property type="entry name" value="Ribulose-phoshate binding barrel"/>
    <property type="match status" value="1"/>
</dbReference>
<proteinExistence type="inferred from homology"/>
<protein>
    <recommendedName>
        <fullName evidence="1">1-(5-phosphoribosyl)-5-[(5-phosphoribosylamino)methylideneamino] imidazole-4-carboxamide isomerase</fullName>
        <ecNumber evidence="1">5.3.1.16</ecNumber>
    </recommendedName>
    <alternativeName>
        <fullName evidence="1">Phosphoribosylformimino-5-aminoimidazole carboxamide ribotide isomerase</fullName>
    </alternativeName>
</protein>
<name>HIS4_ACTP2</name>
<accession>A3N3W4</accession>
<keyword id="KW-0028">Amino-acid biosynthesis</keyword>
<keyword id="KW-0963">Cytoplasm</keyword>
<keyword id="KW-0368">Histidine biosynthesis</keyword>
<keyword id="KW-0413">Isomerase</keyword>
<keyword id="KW-1185">Reference proteome</keyword>